<name>AROB_STAA8</name>
<proteinExistence type="inferred from homology"/>
<protein>
    <recommendedName>
        <fullName evidence="1">3-dehydroquinate synthase</fullName>
        <shortName evidence="1">DHQS</shortName>
        <ecNumber evidence="1">4.2.3.4</ecNumber>
    </recommendedName>
</protein>
<evidence type="ECO:0000255" key="1">
    <source>
        <dbReference type="HAMAP-Rule" id="MF_00110"/>
    </source>
</evidence>
<comment type="function">
    <text evidence="1">Catalyzes the conversion of 3-deoxy-D-arabino-heptulosonate 7-phosphate (DAHP) to dehydroquinate (DHQ).</text>
</comment>
<comment type="catalytic activity">
    <reaction evidence="1">
        <text>7-phospho-2-dehydro-3-deoxy-D-arabino-heptonate = 3-dehydroquinate + phosphate</text>
        <dbReference type="Rhea" id="RHEA:21968"/>
        <dbReference type="ChEBI" id="CHEBI:32364"/>
        <dbReference type="ChEBI" id="CHEBI:43474"/>
        <dbReference type="ChEBI" id="CHEBI:58394"/>
        <dbReference type="EC" id="4.2.3.4"/>
    </reaction>
</comment>
<comment type="cofactor">
    <cofactor evidence="1">
        <name>Co(2+)</name>
        <dbReference type="ChEBI" id="CHEBI:48828"/>
    </cofactor>
    <cofactor evidence="1">
        <name>Zn(2+)</name>
        <dbReference type="ChEBI" id="CHEBI:29105"/>
    </cofactor>
    <text evidence="1">Binds 1 divalent metal cation per subunit. Can use either Co(2+) or Zn(2+).</text>
</comment>
<comment type="cofactor">
    <cofactor evidence="1">
        <name>NAD(+)</name>
        <dbReference type="ChEBI" id="CHEBI:57540"/>
    </cofactor>
</comment>
<comment type="pathway">
    <text evidence="1">Metabolic intermediate biosynthesis; chorismate biosynthesis; chorismate from D-erythrose 4-phosphate and phosphoenolpyruvate: step 2/7.</text>
</comment>
<comment type="subcellular location">
    <subcellularLocation>
        <location evidence="1">Cytoplasm</location>
    </subcellularLocation>
</comment>
<comment type="similarity">
    <text evidence="1">Belongs to the sugar phosphate cyclases superfamily. Dehydroquinate synthase family.</text>
</comment>
<dbReference type="EC" id="4.2.3.4" evidence="1"/>
<dbReference type="EMBL" id="CP000253">
    <property type="protein sequence ID" value="ABD30567.1"/>
    <property type="molecule type" value="Genomic_DNA"/>
</dbReference>
<dbReference type="RefSeq" id="WP_000776325.1">
    <property type="nucleotide sequence ID" value="NZ_LS483365.1"/>
</dbReference>
<dbReference type="RefSeq" id="YP_500000.1">
    <property type="nucleotide sequence ID" value="NC_007795.1"/>
</dbReference>
<dbReference type="SMR" id="Q2FYH0"/>
<dbReference type="STRING" id="93061.SAOUHSC_01482"/>
<dbReference type="PaxDb" id="1280-SAXN108_1488"/>
<dbReference type="GeneID" id="3920237"/>
<dbReference type="KEGG" id="sao:SAOUHSC_01482"/>
<dbReference type="PATRIC" id="fig|93061.5.peg.1351"/>
<dbReference type="eggNOG" id="COG0337">
    <property type="taxonomic scope" value="Bacteria"/>
</dbReference>
<dbReference type="HOGENOM" id="CLU_001201_0_1_9"/>
<dbReference type="OrthoDB" id="9806583at2"/>
<dbReference type="UniPathway" id="UPA00053">
    <property type="reaction ID" value="UER00085"/>
</dbReference>
<dbReference type="PRO" id="PR:Q2FYH0"/>
<dbReference type="Proteomes" id="UP000008816">
    <property type="component" value="Chromosome"/>
</dbReference>
<dbReference type="GO" id="GO:0005737">
    <property type="term" value="C:cytoplasm"/>
    <property type="evidence" value="ECO:0007669"/>
    <property type="project" value="UniProtKB-SubCell"/>
</dbReference>
<dbReference type="GO" id="GO:0003856">
    <property type="term" value="F:3-dehydroquinate synthase activity"/>
    <property type="evidence" value="ECO:0000318"/>
    <property type="project" value="GO_Central"/>
</dbReference>
<dbReference type="GO" id="GO:0046872">
    <property type="term" value="F:metal ion binding"/>
    <property type="evidence" value="ECO:0007669"/>
    <property type="project" value="UniProtKB-KW"/>
</dbReference>
<dbReference type="GO" id="GO:0000166">
    <property type="term" value="F:nucleotide binding"/>
    <property type="evidence" value="ECO:0007669"/>
    <property type="project" value="UniProtKB-KW"/>
</dbReference>
<dbReference type="GO" id="GO:0008652">
    <property type="term" value="P:amino acid biosynthetic process"/>
    <property type="evidence" value="ECO:0007669"/>
    <property type="project" value="UniProtKB-KW"/>
</dbReference>
<dbReference type="GO" id="GO:0009073">
    <property type="term" value="P:aromatic amino acid family biosynthetic process"/>
    <property type="evidence" value="ECO:0000318"/>
    <property type="project" value="GO_Central"/>
</dbReference>
<dbReference type="GO" id="GO:0009423">
    <property type="term" value="P:chorismate biosynthetic process"/>
    <property type="evidence" value="ECO:0007669"/>
    <property type="project" value="UniProtKB-UniRule"/>
</dbReference>
<dbReference type="FunFam" id="1.20.1090.10:FF:000016">
    <property type="entry name" value="3-dehydroquinate synthase"/>
    <property type="match status" value="1"/>
</dbReference>
<dbReference type="FunFam" id="3.40.50.1970:FF:000019">
    <property type="entry name" value="3-dehydroquinate synthase"/>
    <property type="match status" value="1"/>
</dbReference>
<dbReference type="Gene3D" id="3.40.50.1970">
    <property type="match status" value="1"/>
</dbReference>
<dbReference type="Gene3D" id="1.20.1090.10">
    <property type="entry name" value="Dehydroquinate synthase-like - alpha domain"/>
    <property type="match status" value="1"/>
</dbReference>
<dbReference type="HAMAP" id="MF_00110">
    <property type="entry name" value="DHQ_synthase"/>
    <property type="match status" value="1"/>
</dbReference>
<dbReference type="InterPro" id="IPR050071">
    <property type="entry name" value="Dehydroquinate_synthase"/>
</dbReference>
<dbReference type="InterPro" id="IPR016037">
    <property type="entry name" value="DHQ_synth_AroB"/>
</dbReference>
<dbReference type="InterPro" id="IPR030963">
    <property type="entry name" value="DHQ_synth_fam"/>
</dbReference>
<dbReference type="InterPro" id="IPR030960">
    <property type="entry name" value="DHQS/DOIS_N"/>
</dbReference>
<dbReference type="InterPro" id="IPR056179">
    <property type="entry name" value="DHQS_C"/>
</dbReference>
<dbReference type="NCBIfam" id="TIGR01357">
    <property type="entry name" value="aroB"/>
    <property type="match status" value="1"/>
</dbReference>
<dbReference type="PANTHER" id="PTHR43622">
    <property type="entry name" value="3-DEHYDROQUINATE SYNTHASE"/>
    <property type="match status" value="1"/>
</dbReference>
<dbReference type="PANTHER" id="PTHR43622:SF7">
    <property type="entry name" value="3-DEHYDROQUINATE SYNTHASE, CHLOROPLASTIC"/>
    <property type="match status" value="1"/>
</dbReference>
<dbReference type="Pfam" id="PF01761">
    <property type="entry name" value="DHQ_synthase"/>
    <property type="match status" value="1"/>
</dbReference>
<dbReference type="Pfam" id="PF24621">
    <property type="entry name" value="DHQS_C"/>
    <property type="match status" value="1"/>
</dbReference>
<dbReference type="PIRSF" id="PIRSF001455">
    <property type="entry name" value="DHQ_synth"/>
    <property type="match status" value="1"/>
</dbReference>
<dbReference type="SUPFAM" id="SSF56796">
    <property type="entry name" value="Dehydroquinate synthase-like"/>
    <property type="match status" value="1"/>
</dbReference>
<organism>
    <name type="scientific">Staphylococcus aureus (strain NCTC 8325 / PS 47)</name>
    <dbReference type="NCBI Taxonomy" id="93061"/>
    <lineage>
        <taxon>Bacteria</taxon>
        <taxon>Bacillati</taxon>
        <taxon>Bacillota</taxon>
        <taxon>Bacilli</taxon>
        <taxon>Bacillales</taxon>
        <taxon>Staphylococcaceae</taxon>
        <taxon>Staphylococcus</taxon>
    </lineage>
</organism>
<sequence length="354" mass="40300">MKLQTTYPSNNYPIYVEHGAIDHISTYIDQFDQSFILIDEHVNQYFADKFDDILSYENVHKVIIPAGEKTKTFEQYQETLEYILSHHVTRNTAIIAVGGGATGDFAGFIAATLLRGVHFIQVPTTILAHDSSVGGKVGINSKQGKNLIGAFYRPTAVIYDLVFLKTLPFEQILSGYAEVYKHALLNGESATQDIEQHFKDREILQSLNGMDKYIAKGIETKLDIVIADEKEQGVRKFLNLGHTFGHAVEYYHKIPHGHAVMVGIIYQFIVANALFDSKHDINHYIQYLIQLGYPLDMITDLDFETLYQYMLSDKKNDKQGVQMVLIRQFGDIVVQHVDQLTLQHACEQLKTYFK</sequence>
<gene>
    <name evidence="1" type="primary">aroB</name>
    <name type="ordered locus">SAOUHSC_01482</name>
</gene>
<reference key="1">
    <citation type="book" date="2006" name="Gram positive pathogens, 2nd edition">
        <title>The Staphylococcus aureus NCTC 8325 genome.</title>
        <editorList>
            <person name="Fischetti V."/>
            <person name="Novick R."/>
            <person name="Ferretti J."/>
            <person name="Portnoy D."/>
            <person name="Rood J."/>
        </editorList>
        <authorList>
            <person name="Gillaspy A.F."/>
            <person name="Worrell V."/>
            <person name="Orvis J."/>
            <person name="Roe B.A."/>
            <person name="Dyer D.W."/>
            <person name="Iandolo J.J."/>
        </authorList>
    </citation>
    <scope>NUCLEOTIDE SEQUENCE [LARGE SCALE GENOMIC DNA]</scope>
    <source>
        <strain>NCTC 8325 / PS 47</strain>
    </source>
</reference>
<accession>Q2FYH0</accession>
<feature type="chain" id="PRO_1000094629" description="3-dehydroquinate synthase">
    <location>
        <begin position="1"/>
        <end position="354"/>
    </location>
</feature>
<feature type="binding site" evidence="1">
    <location>
        <begin position="100"/>
        <end position="104"/>
    </location>
    <ligand>
        <name>NAD(+)</name>
        <dbReference type="ChEBI" id="CHEBI:57540"/>
    </ligand>
</feature>
<feature type="binding site" evidence="1">
    <location>
        <begin position="124"/>
        <end position="125"/>
    </location>
    <ligand>
        <name>NAD(+)</name>
        <dbReference type="ChEBI" id="CHEBI:57540"/>
    </ligand>
</feature>
<feature type="binding site" evidence="1">
    <location>
        <position position="136"/>
    </location>
    <ligand>
        <name>NAD(+)</name>
        <dbReference type="ChEBI" id="CHEBI:57540"/>
    </ligand>
</feature>
<feature type="binding site" evidence="1">
    <location>
        <position position="145"/>
    </location>
    <ligand>
        <name>NAD(+)</name>
        <dbReference type="ChEBI" id="CHEBI:57540"/>
    </ligand>
</feature>
<feature type="binding site" evidence="1">
    <location>
        <begin position="163"/>
        <end position="166"/>
    </location>
    <ligand>
        <name>NAD(+)</name>
        <dbReference type="ChEBI" id="CHEBI:57540"/>
    </ligand>
</feature>
<feature type="binding site" evidence="1">
    <location>
        <position position="178"/>
    </location>
    <ligand>
        <name>Zn(2+)</name>
        <dbReference type="ChEBI" id="CHEBI:29105"/>
    </ligand>
</feature>
<feature type="binding site" evidence="1">
    <location>
        <position position="242"/>
    </location>
    <ligand>
        <name>Zn(2+)</name>
        <dbReference type="ChEBI" id="CHEBI:29105"/>
    </ligand>
</feature>
<feature type="binding site" evidence="1">
    <location>
        <position position="256"/>
    </location>
    <ligand>
        <name>Zn(2+)</name>
        <dbReference type="ChEBI" id="CHEBI:29105"/>
    </ligand>
</feature>
<keyword id="KW-0028">Amino-acid biosynthesis</keyword>
<keyword id="KW-0057">Aromatic amino acid biosynthesis</keyword>
<keyword id="KW-0170">Cobalt</keyword>
<keyword id="KW-0963">Cytoplasm</keyword>
<keyword id="KW-0456">Lyase</keyword>
<keyword id="KW-0479">Metal-binding</keyword>
<keyword id="KW-0520">NAD</keyword>
<keyword id="KW-0547">Nucleotide-binding</keyword>
<keyword id="KW-1185">Reference proteome</keyword>
<keyword id="KW-0862">Zinc</keyword>